<feature type="chain" id="PRO_1000092400" description="Elongation factor 4">
    <location>
        <begin position="1"/>
        <end position="603"/>
    </location>
</feature>
<feature type="domain" description="tr-type G">
    <location>
        <begin position="6"/>
        <end position="188"/>
    </location>
</feature>
<feature type="binding site" evidence="1">
    <location>
        <begin position="18"/>
        <end position="23"/>
    </location>
    <ligand>
        <name>GTP</name>
        <dbReference type="ChEBI" id="CHEBI:37565"/>
    </ligand>
</feature>
<feature type="binding site" evidence="1">
    <location>
        <begin position="135"/>
        <end position="138"/>
    </location>
    <ligand>
        <name>GTP</name>
        <dbReference type="ChEBI" id="CHEBI:37565"/>
    </ligand>
</feature>
<proteinExistence type="inferred from homology"/>
<keyword id="KW-1003">Cell membrane</keyword>
<keyword id="KW-0342">GTP-binding</keyword>
<keyword id="KW-0378">Hydrolase</keyword>
<keyword id="KW-0472">Membrane</keyword>
<keyword id="KW-0547">Nucleotide-binding</keyword>
<keyword id="KW-0648">Protein biosynthesis</keyword>
<keyword id="KW-1185">Reference proteome</keyword>
<name>LEPA_FINM2</name>
<comment type="function">
    <text evidence="1">Required for accurate and efficient protein synthesis under certain stress conditions. May act as a fidelity factor of the translation reaction, by catalyzing a one-codon backward translocation of tRNAs on improperly translocated ribosomes. Back-translocation proceeds from a post-translocation (POST) complex to a pre-translocation (PRE) complex, thus giving elongation factor G a second chance to translocate the tRNAs correctly. Binds to ribosomes in a GTP-dependent manner.</text>
</comment>
<comment type="catalytic activity">
    <reaction evidence="1">
        <text>GTP + H2O = GDP + phosphate + H(+)</text>
        <dbReference type="Rhea" id="RHEA:19669"/>
        <dbReference type="ChEBI" id="CHEBI:15377"/>
        <dbReference type="ChEBI" id="CHEBI:15378"/>
        <dbReference type="ChEBI" id="CHEBI:37565"/>
        <dbReference type="ChEBI" id="CHEBI:43474"/>
        <dbReference type="ChEBI" id="CHEBI:58189"/>
        <dbReference type="EC" id="3.6.5.n1"/>
    </reaction>
</comment>
<comment type="subcellular location">
    <subcellularLocation>
        <location evidence="1">Cell membrane</location>
        <topology evidence="1">Peripheral membrane protein</topology>
        <orientation evidence="1">Cytoplasmic side</orientation>
    </subcellularLocation>
</comment>
<comment type="similarity">
    <text evidence="1">Belongs to the TRAFAC class translation factor GTPase superfamily. Classic translation factor GTPase family. LepA subfamily.</text>
</comment>
<accession>B0S1G2</accession>
<protein>
    <recommendedName>
        <fullName evidence="1">Elongation factor 4</fullName>
        <shortName evidence="1">EF-4</shortName>
        <ecNumber evidence="1">3.6.5.n1</ecNumber>
    </recommendedName>
    <alternativeName>
        <fullName evidence="1">Ribosomal back-translocase LepA</fullName>
    </alternativeName>
</protein>
<reference key="1">
    <citation type="journal article" date="2008" name="DNA Res.">
        <title>Complete genome sequence of Finegoldia magna, an anaerobic opportunistic pathogen.</title>
        <authorList>
            <person name="Goto T."/>
            <person name="Yamashita A."/>
            <person name="Hirakawa H."/>
            <person name="Matsutani M."/>
            <person name="Todo K."/>
            <person name="Ohshima K."/>
            <person name="Toh H."/>
            <person name="Miyamoto K."/>
            <person name="Kuhara S."/>
            <person name="Hattori M."/>
            <person name="Shimizu T."/>
            <person name="Akimoto S."/>
        </authorList>
    </citation>
    <scope>NUCLEOTIDE SEQUENCE [LARGE SCALE GENOMIC DNA]</scope>
    <source>
        <strain>ATCC 29328 / DSM 20472 / WAL 2508</strain>
    </source>
</reference>
<sequence length="603" mass="67950">MKYDKKYVRNFSIIAHIDHGKSTLADRLIEETGMLTHREMSEQVLDSMDLERERGITIKLKAIKLFYKAKDNNVYILNLIDTPGHVDFTYEVSRSLKACEGAVLIVDATQGVEAQTLGNVYLAIDQDLEILPVINKIDLPSADINFAKKEIEDIIGLDAENVPAVSAKEGINIVDVLEDIVKNVPAPIGDENKPLKALIFDSYYDFYKGVVVYVRVFDGCIKPGSEILMMSTNKTFEVTECGYTSSGMISTDEISAGDVGYVVCSIKNVKDARVGDTITDKNNPVDKPLEGYKQVTPMVYCGIYPAEGEDFNSVRDALEKLQVNDAALTFENETSIALGFGLRCGFLGLLHMEIIQERLDREFDLDIIATAPSVIYKVHKKDGTEIEIQNPTNFPKETEIDYVEEPVVHAEIMTPTDYVGVIMELCQGKRGTFIDMTYLDEKRVTIKYKLPLNEVIYDFYDALKSKTRGYASLDYELIGYEKSNLIKLEIMINSEKVDALTIIVHEDLAYERARKIVTKLKDEIPRHQFVIPVQAAIGNKIIARETIKAYRKDVLAKCYGGDITRKRKLLEKQKEGKKRMRSVGSVDVPQEAFLSVLKYDEVN</sequence>
<organism>
    <name type="scientific">Finegoldia magna (strain ATCC 29328 / DSM 20472 / WAL 2508)</name>
    <name type="common">Peptostreptococcus magnus</name>
    <dbReference type="NCBI Taxonomy" id="334413"/>
    <lineage>
        <taxon>Bacteria</taxon>
        <taxon>Bacillati</taxon>
        <taxon>Bacillota</taxon>
        <taxon>Tissierellia</taxon>
        <taxon>Tissierellales</taxon>
        <taxon>Peptoniphilaceae</taxon>
        <taxon>Finegoldia</taxon>
    </lineage>
</organism>
<gene>
    <name evidence="1" type="primary">lepA</name>
    <name type="ordered locus">FMG_0784</name>
</gene>
<dbReference type="EC" id="3.6.5.n1" evidence="1"/>
<dbReference type="EMBL" id="AP008971">
    <property type="protein sequence ID" value="BAG08202.1"/>
    <property type="molecule type" value="Genomic_DNA"/>
</dbReference>
<dbReference type="RefSeq" id="WP_012290626.1">
    <property type="nucleotide sequence ID" value="NC_010376.1"/>
</dbReference>
<dbReference type="SMR" id="B0S1G2"/>
<dbReference type="STRING" id="334413.FMG_0784"/>
<dbReference type="KEGG" id="fma:FMG_0784"/>
<dbReference type="eggNOG" id="COG0481">
    <property type="taxonomic scope" value="Bacteria"/>
</dbReference>
<dbReference type="HOGENOM" id="CLU_009995_3_3_9"/>
<dbReference type="Proteomes" id="UP000001319">
    <property type="component" value="Chromosome"/>
</dbReference>
<dbReference type="GO" id="GO:0005886">
    <property type="term" value="C:plasma membrane"/>
    <property type="evidence" value="ECO:0007669"/>
    <property type="project" value="UniProtKB-SubCell"/>
</dbReference>
<dbReference type="GO" id="GO:0005525">
    <property type="term" value="F:GTP binding"/>
    <property type="evidence" value="ECO:0007669"/>
    <property type="project" value="UniProtKB-UniRule"/>
</dbReference>
<dbReference type="GO" id="GO:0003924">
    <property type="term" value="F:GTPase activity"/>
    <property type="evidence" value="ECO:0007669"/>
    <property type="project" value="UniProtKB-UniRule"/>
</dbReference>
<dbReference type="GO" id="GO:0043022">
    <property type="term" value="F:ribosome binding"/>
    <property type="evidence" value="ECO:0007669"/>
    <property type="project" value="UniProtKB-UniRule"/>
</dbReference>
<dbReference type="GO" id="GO:0003746">
    <property type="term" value="F:translation elongation factor activity"/>
    <property type="evidence" value="ECO:0007669"/>
    <property type="project" value="UniProtKB-UniRule"/>
</dbReference>
<dbReference type="GO" id="GO:0045727">
    <property type="term" value="P:positive regulation of translation"/>
    <property type="evidence" value="ECO:0007669"/>
    <property type="project" value="UniProtKB-UniRule"/>
</dbReference>
<dbReference type="CDD" id="cd03699">
    <property type="entry name" value="EF4_II"/>
    <property type="match status" value="1"/>
</dbReference>
<dbReference type="CDD" id="cd16260">
    <property type="entry name" value="EF4_III"/>
    <property type="match status" value="1"/>
</dbReference>
<dbReference type="CDD" id="cd01890">
    <property type="entry name" value="LepA"/>
    <property type="match status" value="1"/>
</dbReference>
<dbReference type="CDD" id="cd03709">
    <property type="entry name" value="lepA_C"/>
    <property type="match status" value="1"/>
</dbReference>
<dbReference type="FunFam" id="3.40.50.300:FF:000078">
    <property type="entry name" value="Elongation factor 4"/>
    <property type="match status" value="1"/>
</dbReference>
<dbReference type="FunFam" id="2.40.30.10:FF:000015">
    <property type="entry name" value="Translation factor GUF1, mitochondrial"/>
    <property type="match status" value="1"/>
</dbReference>
<dbReference type="FunFam" id="3.30.70.240:FF:000007">
    <property type="entry name" value="Translation factor GUF1, mitochondrial"/>
    <property type="match status" value="1"/>
</dbReference>
<dbReference type="FunFam" id="3.30.70.2570:FF:000001">
    <property type="entry name" value="Translation factor GUF1, mitochondrial"/>
    <property type="match status" value="1"/>
</dbReference>
<dbReference type="FunFam" id="3.30.70.870:FF:000004">
    <property type="entry name" value="Translation factor GUF1, mitochondrial"/>
    <property type="match status" value="1"/>
</dbReference>
<dbReference type="Gene3D" id="3.30.70.240">
    <property type="match status" value="1"/>
</dbReference>
<dbReference type="Gene3D" id="3.30.70.2570">
    <property type="entry name" value="Elongation factor 4, C-terminal domain"/>
    <property type="match status" value="1"/>
</dbReference>
<dbReference type="Gene3D" id="3.30.70.870">
    <property type="entry name" value="Elongation Factor G (Translational Gtpase), domain 3"/>
    <property type="match status" value="1"/>
</dbReference>
<dbReference type="Gene3D" id="3.40.50.300">
    <property type="entry name" value="P-loop containing nucleotide triphosphate hydrolases"/>
    <property type="match status" value="1"/>
</dbReference>
<dbReference type="Gene3D" id="2.40.30.10">
    <property type="entry name" value="Translation factors"/>
    <property type="match status" value="1"/>
</dbReference>
<dbReference type="HAMAP" id="MF_00071">
    <property type="entry name" value="LepA"/>
    <property type="match status" value="1"/>
</dbReference>
<dbReference type="InterPro" id="IPR006297">
    <property type="entry name" value="EF-4"/>
</dbReference>
<dbReference type="InterPro" id="IPR035647">
    <property type="entry name" value="EFG_III/V"/>
</dbReference>
<dbReference type="InterPro" id="IPR000640">
    <property type="entry name" value="EFG_V-like"/>
</dbReference>
<dbReference type="InterPro" id="IPR004161">
    <property type="entry name" value="EFTu-like_2"/>
</dbReference>
<dbReference type="InterPro" id="IPR031157">
    <property type="entry name" value="G_TR_CS"/>
</dbReference>
<dbReference type="InterPro" id="IPR038363">
    <property type="entry name" value="LepA_C_sf"/>
</dbReference>
<dbReference type="InterPro" id="IPR013842">
    <property type="entry name" value="LepA_CTD"/>
</dbReference>
<dbReference type="InterPro" id="IPR035654">
    <property type="entry name" value="LepA_IV"/>
</dbReference>
<dbReference type="InterPro" id="IPR027417">
    <property type="entry name" value="P-loop_NTPase"/>
</dbReference>
<dbReference type="InterPro" id="IPR005225">
    <property type="entry name" value="Small_GTP-bd"/>
</dbReference>
<dbReference type="InterPro" id="IPR000795">
    <property type="entry name" value="T_Tr_GTP-bd_dom"/>
</dbReference>
<dbReference type="InterPro" id="IPR009000">
    <property type="entry name" value="Transl_B-barrel_sf"/>
</dbReference>
<dbReference type="NCBIfam" id="TIGR01393">
    <property type="entry name" value="lepA"/>
    <property type="match status" value="1"/>
</dbReference>
<dbReference type="NCBIfam" id="TIGR00231">
    <property type="entry name" value="small_GTP"/>
    <property type="match status" value="1"/>
</dbReference>
<dbReference type="PANTHER" id="PTHR43512:SF4">
    <property type="entry name" value="TRANSLATION FACTOR GUF1 HOMOLOG, CHLOROPLASTIC"/>
    <property type="match status" value="1"/>
</dbReference>
<dbReference type="PANTHER" id="PTHR43512">
    <property type="entry name" value="TRANSLATION FACTOR GUF1-RELATED"/>
    <property type="match status" value="1"/>
</dbReference>
<dbReference type="Pfam" id="PF00679">
    <property type="entry name" value="EFG_C"/>
    <property type="match status" value="1"/>
</dbReference>
<dbReference type="Pfam" id="PF00009">
    <property type="entry name" value="GTP_EFTU"/>
    <property type="match status" value="1"/>
</dbReference>
<dbReference type="Pfam" id="PF03144">
    <property type="entry name" value="GTP_EFTU_D2"/>
    <property type="match status" value="1"/>
</dbReference>
<dbReference type="Pfam" id="PF06421">
    <property type="entry name" value="LepA_C"/>
    <property type="match status" value="1"/>
</dbReference>
<dbReference type="PRINTS" id="PR00315">
    <property type="entry name" value="ELONGATNFCT"/>
</dbReference>
<dbReference type="SMART" id="SM00838">
    <property type="entry name" value="EFG_C"/>
    <property type="match status" value="1"/>
</dbReference>
<dbReference type="SUPFAM" id="SSF54980">
    <property type="entry name" value="EF-G C-terminal domain-like"/>
    <property type="match status" value="2"/>
</dbReference>
<dbReference type="SUPFAM" id="SSF52540">
    <property type="entry name" value="P-loop containing nucleoside triphosphate hydrolases"/>
    <property type="match status" value="1"/>
</dbReference>
<dbReference type="SUPFAM" id="SSF50447">
    <property type="entry name" value="Translation proteins"/>
    <property type="match status" value="1"/>
</dbReference>
<dbReference type="PROSITE" id="PS00301">
    <property type="entry name" value="G_TR_1"/>
    <property type="match status" value="1"/>
</dbReference>
<dbReference type="PROSITE" id="PS51722">
    <property type="entry name" value="G_TR_2"/>
    <property type="match status" value="1"/>
</dbReference>
<evidence type="ECO:0000255" key="1">
    <source>
        <dbReference type="HAMAP-Rule" id="MF_00071"/>
    </source>
</evidence>